<proteinExistence type="inferred from homology"/>
<keyword id="KW-0342">GTP-binding</keyword>
<keyword id="KW-0547">Nucleotide-binding</keyword>
<keyword id="KW-1185">Reference proteome</keyword>
<keyword id="KW-0677">Repeat</keyword>
<keyword id="KW-0690">Ribosome biogenesis</keyword>
<reference key="1">
    <citation type="journal article" date="2008" name="J. Bacteriol.">
        <title>The pangenome structure of Escherichia coli: comparative genomic analysis of E. coli commensal and pathogenic isolates.</title>
        <authorList>
            <person name="Rasko D.A."/>
            <person name="Rosovitz M.J."/>
            <person name="Myers G.S.A."/>
            <person name="Mongodin E.F."/>
            <person name="Fricke W.F."/>
            <person name="Gajer P."/>
            <person name="Crabtree J."/>
            <person name="Sebaihia M."/>
            <person name="Thomson N.R."/>
            <person name="Chaudhuri R."/>
            <person name="Henderson I.R."/>
            <person name="Sperandio V."/>
            <person name="Ravel J."/>
        </authorList>
    </citation>
    <scope>NUCLEOTIDE SEQUENCE [LARGE SCALE GENOMIC DNA]</scope>
    <source>
        <strain>E24377A / ETEC</strain>
    </source>
</reference>
<sequence>MVPVVALVGRPNVGKSTLFNRLTRTRDALVADFPGLTRDRKYGRAEIEGREFICIDTGGIDGTEDGVETRMAEQSLLAIEEADVVLFMVDARAGLMPADEAIAKHLRSREKPTFLVANKTDGLDPDQAVVDFYSLGLGEIYPIAASHGRGVLSLLEHVLLPWMEDLAPQEEVDEDAEYWAQFEAEENGEEEEEDDFDPQSLPIKLAIVGRPNVGKSTLTNRILGEERVVVYDMPGTTRDSIYIPMERDGREYVLIDTAGVRKRGKITDAVEKFSVIKTLQAIEDANVVMLVIDAREGISDQDLSLLGFILNSGRSLVIVVNKWDGLSQEVKEQVKETLDFRLGFIDFARVHFISALHGSGVGNLFESVREAYDSSTRRVGTSMLTRIMTMAVEDHQPPLVRGRRVKLKYAHAGGYNPPIVVIHGNQVKDLPDSYKRYLMNYFRKSLDVMGSPIRIQFKEGENPYANKRNTLTPTQMRKRKRLMKHIKKNK</sequence>
<feature type="chain" id="PRO_1000058522" description="GTPase Der">
    <location>
        <begin position="1"/>
        <end position="490"/>
    </location>
</feature>
<feature type="domain" description="EngA-type G 1">
    <location>
        <begin position="3"/>
        <end position="166"/>
    </location>
</feature>
<feature type="domain" description="EngA-type G 2">
    <location>
        <begin position="203"/>
        <end position="376"/>
    </location>
</feature>
<feature type="domain" description="KH-like" evidence="1">
    <location>
        <begin position="377"/>
        <end position="461"/>
    </location>
</feature>
<feature type="binding site" evidence="1">
    <location>
        <begin position="9"/>
        <end position="16"/>
    </location>
    <ligand>
        <name>GTP</name>
        <dbReference type="ChEBI" id="CHEBI:37565"/>
        <label>1</label>
    </ligand>
</feature>
<feature type="binding site" evidence="1">
    <location>
        <begin position="56"/>
        <end position="60"/>
    </location>
    <ligand>
        <name>GTP</name>
        <dbReference type="ChEBI" id="CHEBI:37565"/>
        <label>1</label>
    </ligand>
</feature>
<feature type="binding site" evidence="1">
    <location>
        <begin position="118"/>
        <end position="121"/>
    </location>
    <ligand>
        <name>GTP</name>
        <dbReference type="ChEBI" id="CHEBI:37565"/>
        <label>1</label>
    </ligand>
</feature>
<feature type="binding site" evidence="1">
    <location>
        <begin position="209"/>
        <end position="216"/>
    </location>
    <ligand>
        <name>GTP</name>
        <dbReference type="ChEBI" id="CHEBI:37565"/>
        <label>2</label>
    </ligand>
</feature>
<feature type="binding site" evidence="1">
    <location>
        <begin position="256"/>
        <end position="260"/>
    </location>
    <ligand>
        <name>GTP</name>
        <dbReference type="ChEBI" id="CHEBI:37565"/>
        <label>2</label>
    </ligand>
</feature>
<feature type="binding site" evidence="1">
    <location>
        <begin position="321"/>
        <end position="324"/>
    </location>
    <ligand>
        <name>GTP</name>
        <dbReference type="ChEBI" id="CHEBI:37565"/>
        <label>2</label>
    </ligand>
</feature>
<evidence type="ECO:0000255" key="1">
    <source>
        <dbReference type="HAMAP-Rule" id="MF_00195"/>
    </source>
</evidence>
<comment type="function">
    <text evidence="1">GTPase that plays an essential role in the late steps of ribosome biogenesis.</text>
</comment>
<comment type="subunit">
    <text evidence="1">Associates with the 50S ribosomal subunit.</text>
</comment>
<comment type="similarity">
    <text evidence="1">Belongs to the TRAFAC class TrmE-Era-EngA-EngB-Septin-like GTPase superfamily. EngA (Der) GTPase family.</text>
</comment>
<name>DER_ECO24</name>
<dbReference type="EMBL" id="CP000800">
    <property type="protein sequence ID" value="ABV18466.1"/>
    <property type="molecule type" value="Genomic_DNA"/>
</dbReference>
<dbReference type="RefSeq" id="WP_000249410.1">
    <property type="nucleotide sequence ID" value="NC_009801.1"/>
</dbReference>
<dbReference type="SMR" id="A7ZPV4"/>
<dbReference type="GeneID" id="75206204"/>
<dbReference type="KEGG" id="ecw:EcE24377A_2795"/>
<dbReference type="HOGENOM" id="CLU_016077_6_2_6"/>
<dbReference type="Proteomes" id="UP000001122">
    <property type="component" value="Chromosome"/>
</dbReference>
<dbReference type="GO" id="GO:0005525">
    <property type="term" value="F:GTP binding"/>
    <property type="evidence" value="ECO:0007669"/>
    <property type="project" value="UniProtKB-UniRule"/>
</dbReference>
<dbReference type="GO" id="GO:0043022">
    <property type="term" value="F:ribosome binding"/>
    <property type="evidence" value="ECO:0007669"/>
    <property type="project" value="TreeGrafter"/>
</dbReference>
<dbReference type="GO" id="GO:0042254">
    <property type="term" value="P:ribosome biogenesis"/>
    <property type="evidence" value="ECO:0007669"/>
    <property type="project" value="UniProtKB-KW"/>
</dbReference>
<dbReference type="CDD" id="cd01894">
    <property type="entry name" value="EngA1"/>
    <property type="match status" value="1"/>
</dbReference>
<dbReference type="CDD" id="cd01895">
    <property type="entry name" value="EngA2"/>
    <property type="match status" value="1"/>
</dbReference>
<dbReference type="FunFam" id="3.30.300.20:FF:000004">
    <property type="entry name" value="GTPase Der"/>
    <property type="match status" value="1"/>
</dbReference>
<dbReference type="FunFam" id="3.40.50.300:FF:000040">
    <property type="entry name" value="GTPase Der"/>
    <property type="match status" value="1"/>
</dbReference>
<dbReference type="FunFam" id="3.40.50.300:FF:000057">
    <property type="entry name" value="GTPase Der"/>
    <property type="match status" value="1"/>
</dbReference>
<dbReference type="Gene3D" id="3.30.300.20">
    <property type="match status" value="1"/>
</dbReference>
<dbReference type="Gene3D" id="3.40.50.300">
    <property type="entry name" value="P-loop containing nucleotide triphosphate hydrolases"/>
    <property type="match status" value="2"/>
</dbReference>
<dbReference type="HAMAP" id="MF_00195">
    <property type="entry name" value="GTPase_Der"/>
    <property type="match status" value="1"/>
</dbReference>
<dbReference type="InterPro" id="IPR031166">
    <property type="entry name" value="G_ENGA"/>
</dbReference>
<dbReference type="InterPro" id="IPR006073">
    <property type="entry name" value="GTP-bd"/>
</dbReference>
<dbReference type="InterPro" id="IPR016484">
    <property type="entry name" value="GTPase_Der"/>
</dbReference>
<dbReference type="InterPro" id="IPR032859">
    <property type="entry name" value="KH_dom-like"/>
</dbReference>
<dbReference type="InterPro" id="IPR015946">
    <property type="entry name" value="KH_dom-like_a/b"/>
</dbReference>
<dbReference type="InterPro" id="IPR027417">
    <property type="entry name" value="P-loop_NTPase"/>
</dbReference>
<dbReference type="InterPro" id="IPR005225">
    <property type="entry name" value="Small_GTP-bd"/>
</dbReference>
<dbReference type="NCBIfam" id="TIGR03594">
    <property type="entry name" value="GTPase_EngA"/>
    <property type="match status" value="1"/>
</dbReference>
<dbReference type="NCBIfam" id="TIGR00231">
    <property type="entry name" value="small_GTP"/>
    <property type="match status" value="2"/>
</dbReference>
<dbReference type="PANTHER" id="PTHR43834">
    <property type="entry name" value="GTPASE DER"/>
    <property type="match status" value="1"/>
</dbReference>
<dbReference type="PANTHER" id="PTHR43834:SF6">
    <property type="entry name" value="GTPASE DER"/>
    <property type="match status" value="1"/>
</dbReference>
<dbReference type="Pfam" id="PF14714">
    <property type="entry name" value="KH_dom-like"/>
    <property type="match status" value="1"/>
</dbReference>
<dbReference type="Pfam" id="PF01926">
    <property type="entry name" value="MMR_HSR1"/>
    <property type="match status" value="2"/>
</dbReference>
<dbReference type="PIRSF" id="PIRSF006485">
    <property type="entry name" value="GTP-binding_EngA"/>
    <property type="match status" value="1"/>
</dbReference>
<dbReference type="PRINTS" id="PR00326">
    <property type="entry name" value="GTP1OBG"/>
</dbReference>
<dbReference type="SUPFAM" id="SSF52540">
    <property type="entry name" value="P-loop containing nucleoside triphosphate hydrolases"/>
    <property type="match status" value="2"/>
</dbReference>
<dbReference type="PROSITE" id="PS51712">
    <property type="entry name" value="G_ENGA"/>
    <property type="match status" value="2"/>
</dbReference>
<protein>
    <recommendedName>
        <fullName evidence="1">GTPase Der</fullName>
    </recommendedName>
    <alternativeName>
        <fullName evidence="1">GTP-binding protein EngA</fullName>
    </alternativeName>
</protein>
<gene>
    <name evidence="1" type="primary">der</name>
    <name type="synonym">engA</name>
    <name type="ordered locus">EcE24377A_2795</name>
</gene>
<accession>A7ZPV4</accession>
<organism>
    <name type="scientific">Escherichia coli O139:H28 (strain E24377A / ETEC)</name>
    <dbReference type="NCBI Taxonomy" id="331111"/>
    <lineage>
        <taxon>Bacteria</taxon>
        <taxon>Pseudomonadati</taxon>
        <taxon>Pseudomonadota</taxon>
        <taxon>Gammaproteobacteria</taxon>
        <taxon>Enterobacterales</taxon>
        <taxon>Enterobacteriaceae</taxon>
        <taxon>Escherichia</taxon>
    </lineage>
</organism>